<protein>
    <recommendedName>
        <fullName>Mimecan</fullName>
    </recommendedName>
    <alternativeName>
        <fullName>Osteoglycin</fullName>
    </alternativeName>
</protein>
<dbReference type="EMBL" id="D31951">
    <property type="protein sequence ID" value="BAA06721.1"/>
    <property type="molecule type" value="mRNA"/>
</dbReference>
<dbReference type="EMBL" id="BC021939">
    <property type="protein sequence ID" value="AAH21939.1"/>
    <property type="molecule type" value="mRNA"/>
</dbReference>
<dbReference type="CCDS" id="CCDS26505.1"/>
<dbReference type="PIR" id="JC4130">
    <property type="entry name" value="JC4130"/>
</dbReference>
<dbReference type="RefSeq" id="NP_032786.1">
    <property type="nucleotide sequence ID" value="NM_008760.5"/>
</dbReference>
<dbReference type="SMR" id="Q62000"/>
<dbReference type="BioGRID" id="201907">
    <property type="interactions" value="1"/>
</dbReference>
<dbReference type="FunCoup" id="Q62000">
    <property type="interactions" value="278"/>
</dbReference>
<dbReference type="IntAct" id="Q62000">
    <property type="interactions" value="15"/>
</dbReference>
<dbReference type="STRING" id="10090.ENSMUSP00000021822"/>
<dbReference type="GlyCosmos" id="Q62000">
    <property type="glycosylation" value="1 site, No reported glycans"/>
</dbReference>
<dbReference type="GlyGen" id="Q62000">
    <property type="glycosylation" value="3 sites, 1 O-linked glycan (1 site)"/>
</dbReference>
<dbReference type="iPTMnet" id="Q62000"/>
<dbReference type="PhosphoSitePlus" id="Q62000"/>
<dbReference type="CPTAC" id="non-CPTAC-4048"/>
<dbReference type="jPOST" id="Q62000"/>
<dbReference type="PaxDb" id="10090-ENSMUSP00000021822"/>
<dbReference type="PeptideAtlas" id="Q62000"/>
<dbReference type="ProteomicsDB" id="295606"/>
<dbReference type="Pumba" id="Q62000"/>
<dbReference type="Antibodypedia" id="2122">
    <property type="antibodies" value="305 antibodies from 34 providers"/>
</dbReference>
<dbReference type="DNASU" id="18295"/>
<dbReference type="Ensembl" id="ENSMUST00000021822.7">
    <property type="protein sequence ID" value="ENSMUSP00000021822.6"/>
    <property type="gene ID" value="ENSMUSG00000021390.7"/>
</dbReference>
<dbReference type="GeneID" id="18295"/>
<dbReference type="KEGG" id="mmu:18295"/>
<dbReference type="UCSC" id="uc007qjr.1">
    <property type="organism name" value="mouse"/>
</dbReference>
<dbReference type="AGR" id="MGI:109278"/>
<dbReference type="CTD" id="4969"/>
<dbReference type="MGI" id="MGI:109278">
    <property type="gene designation" value="Ogn"/>
</dbReference>
<dbReference type="VEuPathDB" id="HostDB:ENSMUSG00000021390"/>
<dbReference type="eggNOG" id="KOG0619">
    <property type="taxonomic scope" value="Eukaryota"/>
</dbReference>
<dbReference type="GeneTree" id="ENSGT00940000157238"/>
<dbReference type="HOGENOM" id="CLU_067583_1_0_1"/>
<dbReference type="InParanoid" id="Q62000"/>
<dbReference type="OMA" id="RIIHLQF"/>
<dbReference type="OrthoDB" id="7451790at2759"/>
<dbReference type="PhylomeDB" id="Q62000"/>
<dbReference type="TreeFam" id="TF351924"/>
<dbReference type="Reactome" id="R-MMU-2022854">
    <property type="pathway name" value="Keratan sulfate biosynthesis"/>
</dbReference>
<dbReference type="Reactome" id="R-MMU-2022857">
    <property type="pathway name" value="Keratan sulfate degradation"/>
</dbReference>
<dbReference type="BioGRID-ORCS" id="18295">
    <property type="hits" value="1 hit in 77 CRISPR screens"/>
</dbReference>
<dbReference type="ChiTaRS" id="Ogn">
    <property type="organism name" value="mouse"/>
</dbReference>
<dbReference type="PRO" id="PR:Q62000"/>
<dbReference type="Proteomes" id="UP000000589">
    <property type="component" value="Chromosome 13"/>
</dbReference>
<dbReference type="RNAct" id="Q62000">
    <property type="molecule type" value="protein"/>
</dbReference>
<dbReference type="Bgee" id="ENSMUSG00000021390">
    <property type="expression patterns" value="Expressed in aorta tunica media and 238 other cell types or tissues"/>
</dbReference>
<dbReference type="ExpressionAtlas" id="Q62000">
    <property type="expression patterns" value="baseline and differential"/>
</dbReference>
<dbReference type="GO" id="GO:0062023">
    <property type="term" value="C:collagen-containing extracellular matrix"/>
    <property type="evidence" value="ECO:0007005"/>
    <property type="project" value="BHF-UCL"/>
</dbReference>
<dbReference type="GO" id="GO:0005615">
    <property type="term" value="C:extracellular space"/>
    <property type="evidence" value="ECO:0007005"/>
    <property type="project" value="BHF-UCL"/>
</dbReference>
<dbReference type="GO" id="GO:0008083">
    <property type="term" value="F:growth factor activity"/>
    <property type="evidence" value="ECO:0007669"/>
    <property type="project" value="UniProtKB-KW"/>
</dbReference>
<dbReference type="FunFam" id="3.80.10.10:FF:000477">
    <property type="entry name" value="Mimecan"/>
    <property type="match status" value="1"/>
</dbReference>
<dbReference type="FunFam" id="3.80.10.10:FF:001802">
    <property type="entry name" value="Mimecan"/>
    <property type="match status" value="1"/>
</dbReference>
<dbReference type="Gene3D" id="3.80.10.10">
    <property type="entry name" value="Ribonuclease Inhibitor"/>
    <property type="match status" value="1"/>
</dbReference>
<dbReference type="InterPro" id="IPR001611">
    <property type="entry name" value="Leu-rich_rpt"/>
</dbReference>
<dbReference type="InterPro" id="IPR003591">
    <property type="entry name" value="Leu-rich_rpt_typical-subtyp"/>
</dbReference>
<dbReference type="InterPro" id="IPR032675">
    <property type="entry name" value="LRR_dom_sf"/>
</dbReference>
<dbReference type="InterPro" id="IPR043547">
    <property type="entry name" value="Mimecan/Epiphycan/Opticin"/>
</dbReference>
<dbReference type="PANTHER" id="PTHR46269">
    <property type="entry name" value="EPIPHYCAN-RELATED"/>
    <property type="match status" value="1"/>
</dbReference>
<dbReference type="PANTHER" id="PTHR46269:SF1">
    <property type="entry name" value="MIMECAN"/>
    <property type="match status" value="1"/>
</dbReference>
<dbReference type="Pfam" id="PF13855">
    <property type="entry name" value="LRR_8"/>
    <property type="match status" value="1"/>
</dbReference>
<dbReference type="SMART" id="SM00369">
    <property type="entry name" value="LRR_TYP"/>
    <property type="match status" value="4"/>
</dbReference>
<dbReference type="SUPFAM" id="SSF52058">
    <property type="entry name" value="L domain-like"/>
    <property type="match status" value="1"/>
</dbReference>
<dbReference type="PROSITE" id="PS51450">
    <property type="entry name" value="LRR"/>
    <property type="match status" value="4"/>
</dbReference>
<gene>
    <name type="primary">Ogn</name>
    <name type="synonym">Og</name>
</gene>
<organism>
    <name type="scientific">Mus musculus</name>
    <name type="common">Mouse</name>
    <dbReference type="NCBI Taxonomy" id="10090"/>
    <lineage>
        <taxon>Eukaryota</taxon>
        <taxon>Metazoa</taxon>
        <taxon>Chordata</taxon>
        <taxon>Craniata</taxon>
        <taxon>Vertebrata</taxon>
        <taxon>Euteleostomi</taxon>
        <taxon>Mammalia</taxon>
        <taxon>Eutheria</taxon>
        <taxon>Euarchontoglires</taxon>
        <taxon>Glires</taxon>
        <taxon>Rodentia</taxon>
        <taxon>Myomorpha</taxon>
        <taxon>Muroidea</taxon>
        <taxon>Muridae</taxon>
        <taxon>Murinae</taxon>
        <taxon>Mus</taxon>
        <taxon>Mus</taxon>
    </lineage>
</organism>
<sequence length="298" mass="34012">METVHSTFLLLLFVPLTQQAPQSQLDSHVNYEYATGNSEETKFSQDYEDKYLDGKSIKEKETMIIPDEKSLQLQKDEVIPSLPTKKENDEMPTCLLCVCLSGSVYCEEVDIDAVPPLPKESAYLYARFNKIKKLTAKDFADMPNLRRLDFTGNLIEDIEDGTFSKLSLLEELTLAENQLLRLPVLPPKLTLLNAKHNKIKSKGIKANTFKKLNKLSFLYLDHNDLESVPPNLPESLRVIHLQFNSISSLTDDTFCKANDTRYIRERIEEIRLEGNPIALGKHPNSFICLKRLPIGSYF</sequence>
<accession>Q62000</accession>
<comment type="function">
    <text evidence="1">Induces bone formation in conjunction with TGF-beta-1 or TGF-beta-2.</text>
</comment>
<comment type="subcellular location">
    <subcellularLocation>
        <location evidence="2">Secreted</location>
        <location evidence="2">Extracellular space</location>
        <location evidence="2">Extracellular matrix</location>
    </subcellularLocation>
</comment>
<comment type="PTM">
    <text evidence="1">Contains keratan sulfate.</text>
</comment>
<comment type="similarity">
    <text evidence="4">Belongs to the small leucine-rich proteoglycan (SLRP) family. SLRP class III subfamily.</text>
</comment>
<feature type="signal peptide" evidence="3">
    <location>
        <begin position="1"/>
        <end position="19"/>
    </location>
</feature>
<feature type="chain" id="PRO_0000032761" description="Mimecan">
    <location>
        <begin position="20"/>
        <end position="298"/>
    </location>
</feature>
<feature type="repeat" description="LRR 1">
    <location>
        <begin position="112"/>
        <end position="131"/>
    </location>
</feature>
<feature type="repeat" description="LRR 2">
    <location>
        <begin position="132"/>
        <end position="155"/>
    </location>
</feature>
<feature type="repeat" description="LRR 3">
    <location>
        <begin position="156"/>
        <end position="179"/>
    </location>
</feature>
<feature type="repeat" description="LRR 4">
    <location>
        <begin position="180"/>
        <end position="199"/>
    </location>
</feature>
<feature type="repeat" description="LRR 5">
    <location>
        <begin position="200"/>
        <end position="225"/>
    </location>
</feature>
<feature type="repeat" description="LRR 6">
    <location>
        <begin position="226"/>
        <end position="246"/>
    </location>
</feature>
<feature type="repeat" description="LRR 7">
    <location>
        <begin position="247"/>
        <end position="277"/>
    </location>
</feature>
<feature type="glycosylation site" description="N-linked (GlcNAc...) (keratan sulfate) asparagine" evidence="3">
    <location>
        <position position="88"/>
    </location>
</feature>
<feature type="glycosylation site" description="N-linked (GlcNAc...) (keratan sulfate) asparagine" evidence="3">
    <location>
        <position position="258"/>
    </location>
</feature>
<feature type="disulfide bond" evidence="1">
    <location>
        <begin position="255"/>
        <end position="288"/>
    </location>
</feature>
<keyword id="KW-1015">Disulfide bond</keyword>
<keyword id="KW-0272">Extracellular matrix</keyword>
<keyword id="KW-0325">Glycoprotein</keyword>
<keyword id="KW-0339">Growth factor</keyword>
<keyword id="KW-0433">Leucine-rich repeat</keyword>
<keyword id="KW-0654">Proteoglycan</keyword>
<keyword id="KW-1185">Reference proteome</keyword>
<keyword id="KW-0677">Repeat</keyword>
<keyword id="KW-0964">Secreted</keyword>
<keyword id="KW-0732">Signal</keyword>
<name>MIME_MOUSE</name>
<proteinExistence type="evidence at protein level"/>
<reference key="1">
    <citation type="journal article" date="1995" name="Gene">
        <title>Molecular cloning of the mouse osteoglycin-encoding gene.</title>
        <authorList>
            <person name="Ujita M."/>
            <person name="Shinomura T."/>
            <person name="Kimata K."/>
        </authorList>
    </citation>
    <scope>NUCLEOTIDE SEQUENCE [MRNA]</scope>
    <source>
        <strain>BALB/cJ</strain>
        <tissue>Limb bud</tissue>
    </source>
</reference>
<reference key="2">
    <citation type="journal article" date="2004" name="Genome Res.">
        <title>The status, quality, and expansion of the NIH full-length cDNA project: the Mammalian Gene Collection (MGC).</title>
        <authorList>
            <consortium name="The MGC Project Team"/>
        </authorList>
    </citation>
    <scope>NUCLEOTIDE SEQUENCE [LARGE SCALE MRNA]</scope>
</reference>
<reference key="3">
    <citation type="journal article" date="2010" name="Cell">
        <title>A tissue-specific atlas of mouse protein phosphorylation and expression.</title>
        <authorList>
            <person name="Huttlin E.L."/>
            <person name="Jedrychowski M.P."/>
            <person name="Elias J.E."/>
            <person name="Goswami T."/>
            <person name="Rad R."/>
            <person name="Beausoleil S.A."/>
            <person name="Villen J."/>
            <person name="Haas W."/>
            <person name="Sowa M.E."/>
            <person name="Gygi S.P."/>
        </authorList>
    </citation>
    <scope>IDENTIFICATION BY MASS SPECTROMETRY [LARGE SCALE ANALYSIS]</scope>
    <source>
        <tissue>Brown adipose tissue</tissue>
        <tissue>Heart</tissue>
        <tissue>Lung</tissue>
    </source>
</reference>
<evidence type="ECO:0000250" key="1">
    <source>
        <dbReference type="UniProtKB" id="P19879"/>
    </source>
</evidence>
<evidence type="ECO:0000250" key="2">
    <source>
        <dbReference type="UniProtKB" id="Q8MJF1"/>
    </source>
</evidence>
<evidence type="ECO:0000255" key="3"/>
<evidence type="ECO:0000305" key="4"/>